<organism>
    <name type="scientific">Nematostella vectensis</name>
    <name type="common">Starlet sea anemone</name>
    <dbReference type="NCBI Taxonomy" id="45351"/>
    <lineage>
        <taxon>Eukaryota</taxon>
        <taxon>Metazoa</taxon>
        <taxon>Cnidaria</taxon>
        <taxon>Anthozoa</taxon>
        <taxon>Hexacorallia</taxon>
        <taxon>Actiniaria</taxon>
        <taxon>Edwardsiidae</taxon>
        <taxon>Nematostella</taxon>
    </lineage>
</organism>
<dbReference type="EMBL" id="DS469649">
    <property type="protein sequence ID" value="EDO37318.1"/>
    <property type="molecule type" value="Genomic_DNA"/>
</dbReference>
<dbReference type="EnsemblMetazoa" id="EDO37318">
    <property type="protein sequence ID" value="EDO37318"/>
    <property type="gene ID" value="NEMVEDRAFT_v1g117062"/>
</dbReference>
<dbReference type="KEGG" id="nve:5508833"/>
<dbReference type="eggNOG" id="ENOG502S4W1">
    <property type="taxonomic scope" value="Eukaryota"/>
</dbReference>
<dbReference type="HOGENOM" id="CLU_189555_0_0_1"/>
<dbReference type="InParanoid" id="A7SG48"/>
<dbReference type="OMA" id="VEHRTYR"/>
<dbReference type="OrthoDB" id="10003460at2759"/>
<dbReference type="PhylomeDB" id="A7SG48"/>
<dbReference type="Proteomes" id="UP000001593">
    <property type="component" value="Unassembled WGS sequence"/>
</dbReference>
<dbReference type="InterPro" id="IPR027885">
    <property type="entry name" value="UPF0728"/>
</dbReference>
<dbReference type="PANTHER" id="PTHR28448">
    <property type="entry name" value="UPF0728 PROTEIN C10ORF53"/>
    <property type="match status" value="1"/>
</dbReference>
<dbReference type="PANTHER" id="PTHR28448:SF1">
    <property type="entry name" value="UPF0728 PROTEIN C10ORF53"/>
    <property type="match status" value="1"/>
</dbReference>
<dbReference type="Pfam" id="PF15092">
    <property type="entry name" value="UPF0728"/>
    <property type="match status" value="1"/>
</dbReference>
<feature type="chain" id="PRO_0000365077" description="UPF0728 protein v1g117062">
    <location>
        <begin position="1"/>
        <end position="91"/>
    </location>
</feature>
<accession>A7SG48</accession>
<sequence length="91" mass="10297">MVKHKVTVMFGPYVSCGILQYKTARLEGLQELLLSDGHSVEFEKTEDRDDVELVVHGEIVFRCKIQDLQYGGDGKLDPTCHRALEAVQKAY</sequence>
<evidence type="ECO:0000305" key="1"/>
<proteinExistence type="inferred from homology"/>
<comment type="similarity">
    <text evidence="1">Belongs to the UPF0728 family.</text>
</comment>
<keyword id="KW-1185">Reference proteome</keyword>
<protein>
    <recommendedName>
        <fullName>UPF0728 protein v1g117062</fullName>
    </recommendedName>
</protein>
<reference key="1">
    <citation type="journal article" date="2007" name="Science">
        <title>Sea anemone genome reveals ancestral eumetazoan gene repertoire and genomic organization.</title>
        <authorList>
            <person name="Putnam N.H."/>
            <person name="Srivastava M."/>
            <person name="Hellsten U."/>
            <person name="Dirks B."/>
            <person name="Chapman J."/>
            <person name="Salamov A."/>
            <person name="Terry A."/>
            <person name="Shapiro H."/>
            <person name="Lindquist E."/>
            <person name="Kapitonov V.V."/>
            <person name="Jurka J."/>
            <person name="Genikhovich G."/>
            <person name="Grigoriev I.V."/>
            <person name="Lucas S.M."/>
            <person name="Steele R.E."/>
            <person name="Finnerty J.R."/>
            <person name="Technau U."/>
            <person name="Martindale M.Q."/>
            <person name="Rokhsar D.S."/>
        </authorList>
    </citation>
    <scope>NUCLEOTIDE SEQUENCE [LARGE SCALE GENOMIC DNA]</scope>
    <source>
        <strain>CH2 X CH6</strain>
    </source>
</reference>
<gene>
    <name type="ORF">v1g117062</name>
</gene>
<name>U728_NEMVE</name>